<name>NADE_ACIAD</name>
<dbReference type="EC" id="6.3.5.1" evidence="1 2"/>
<dbReference type="EMBL" id="CR543861">
    <property type="protein sequence ID" value="CAG69611.1"/>
    <property type="molecule type" value="Genomic_DNA"/>
</dbReference>
<dbReference type="RefSeq" id="WP_004929407.1">
    <property type="nucleotide sequence ID" value="NC_005966.1"/>
</dbReference>
<dbReference type="SMR" id="Q6F8K4"/>
<dbReference type="STRING" id="202950.GCA_001485005_03068"/>
<dbReference type="GeneID" id="45235119"/>
<dbReference type="KEGG" id="aci:ACIAD2888"/>
<dbReference type="eggNOG" id="COG0171">
    <property type="taxonomic scope" value="Bacteria"/>
</dbReference>
<dbReference type="eggNOG" id="COG0388">
    <property type="taxonomic scope" value="Bacteria"/>
</dbReference>
<dbReference type="HOGENOM" id="CLU_022313_2_0_6"/>
<dbReference type="OrthoDB" id="9760188at2"/>
<dbReference type="BioCyc" id="ASP62977:ACIAD_RS13020-MONOMER"/>
<dbReference type="UniPathway" id="UPA00253">
    <property type="reaction ID" value="UER00334"/>
</dbReference>
<dbReference type="Proteomes" id="UP000000430">
    <property type="component" value="Chromosome"/>
</dbReference>
<dbReference type="GO" id="GO:0005737">
    <property type="term" value="C:cytoplasm"/>
    <property type="evidence" value="ECO:0007669"/>
    <property type="project" value="InterPro"/>
</dbReference>
<dbReference type="GO" id="GO:0005524">
    <property type="term" value="F:ATP binding"/>
    <property type="evidence" value="ECO:0007669"/>
    <property type="project" value="UniProtKB-UniRule"/>
</dbReference>
<dbReference type="GO" id="GO:0004359">
    <property type="term" value="F:glutaminase activity"/>
    <property type="evidence" value="ECO:0007669"/>
    <property type="project" value="InterPro"/>
</dbReference>
<dbReference type="GO" id="GO:0003952">
    <property type="term" value="F:NAD+ synthase (glutamine-hydrolyzing) activity"/>
    <property type="evidence" value="ECO:0007669"/>
    <property type="project" value="UniProtKB-EC"/>
</dbReference>
<dbReference type="GO" id="GO:0008795">
    <property type="term" value="F:NAD+ synthase activity"/>
    <property type="evidence" value="ECO:0007669"/>
    <property type="project" value="UniProtKB-UniRule"/>
</dbReference>
<dbReference type="GO" id="GO:0009435">
    <property type="term" value="P:NAD biosynthetic process"/>
    <property type="evidence" value="ECO:0007669"/>
    <property type="project" value="UniProtKB-UniRule"/>
</dbReference>
<dbReference type="CDD" id="cd07570">
    <property type="entry name" value="GAT_Gln-NAD-synth"/>
    <property type="match status" value="1"/>
</dbReference>
<dbReference type="CDD" id="cd00553">
    <property type="entry name" value="NAD_synthase"/>
    <property type="match status" value="1"/>
</dbReference>
<dbReference type="FunFam" id="3.40.50.620:FF:000106">
    <property type="entry name" value="Glutamine-dependent NAD(+) synthetase"/>
    <property type="match status" value="1"/>
</dbReference>
<dbReference type="Gene3D" id="3.60.110.10">
    <property type="entry name" value="Carbon-nitrogen hydrolase"/>
    <property type="match status" value="1"/>
</dbReference>
<dbReference type="Gene3D" id="3.40.50.620">
    <property type="entry name" value="HUPs"/>
    <property type="match status" value="1"/>
</dbReference>
<dbReference type="HAMAP" id="MF_02090">
    <property type="entry name" value="NadE_glutamine_dep"/>
    <property type="match status" value="1"/>
</dbReference>
<dbReference type="InterPro" id="IPR003010">
    <property type="entry name" value="C-N_Hydrolase"/>
</dbReference>
<dbReference type="InterPro" id="IPR036526">
    <property type="entry name" value="C-N_Hydrolase_sf"/>
</dbReference>
<dbReference type="InterPro" id="IPR014445">
    <property type="entry name" value="Gln-dep_NAD_synthase"/>
</dbReference>
<dbReference type="InterPro" id="IPR022310">
    <property type="entry name" value="NAD/GMP_synthase"/>
</dbReference>
<dbReference type="InterPro" id="IPR003694">
    <property type="entry name" value="NAD_synthase"/>
</dbReference>
<dbReference type="InterPro" id="IPR014729">
    <property type="entry name" value="Rossmann-like_a/b/a_fold"/>
</dbReference>
<dbReference type="NCBIfam" id="TIGR00552">
    <property type="entry name" value="nadE"/>
    <property type="match status" value="1"/>
</dbReference>
<dbReference type="NCBIfam" id="NF010588">
    <property type="entry name" value="PRK13981.1"/>
    <property type="match status" value="1"/>
</dbReference>
<dbReference type="PANTHER" id="PTHR23090:SF9">
    <property type="entry name" value="GLUTAMINE-DEPENDENT NAD(+) SYNTHETASE"/>
    <property type="match status" value="1"/>
</dbReference>
<dbReference type="PANTHER" id="PTHR23090">
    <property type="entry name" value="NH 3 /GLUTAMINE-DEPENDENT NAD + SYNTHETASE"/>
    <property type="match status" value="1"/>
</dbReference>
<dbReference type="Pfam" id="PF00795">
    <property type="entry name" value="CN_hydrolase"/>
    <property type="match status" value="1"/>
</dbReference>
<dbReference type="Pfam" id="PF02540">
    <property type="entry name" value="NAD_synthase"/>
    <property type="match status" value="1"/>
</dbReference>
<dbReference type="PIRSF" id="PIRSF006630">
    <property type="entry name" value="NADS_GAT"/>
    <property type="match status" value="1"/>
</dbReference>
<dbReference type="SUPFAM" id="SSF52402">
    <property type="entry name" value="Adenine nucleotide alpha hydrolases-like"/>
    <property type="match status" value="1"/>
</dbReference>
<dbReference type="SUPFAM" id="SSF56317">
    <property type="entry name" value="Carbon-nitrogen hydrolase"/>
    <property type="match status" value="1"/>
</dbReference>
<dbReference type="PROSITE" id="PS50263">
    <property type="entry name" value="CN_HYDROLASE"/>
    <property type="match status" value="1"/>
</dbReference>
<reference key="1">
    <citation type="journal article" date="2004" name="Nucleic Acids Res.">
        <title>Unique features revealed by the genome sequence of Acinetobacter sp. ADP1, a versatile and naturally transformation competent bacterium.</title>
        <authorList>
            <person name="Barbe V."/>
            <person name="Vallenet D."/>
            <person name="Fonknechten N."/>
            <person name="Kreimeyer A."/>
            <person name="Oztas S."/>
            <person name="Labarre L."/>
            <person name="Cruveiller S."/>
            <person name="Robert C."/>
            <person name="Duprat S."/>
            <person name="Wincker P."/>
            <person name="Ornston L.N."/>
            <person name="Weissenbach J."/>
            <person name="Marliere P."/>
            <person name="Cohen G.N."/>
            <person name="Medigue C."/>
        </authorList>
    </citation>
    <scope>NUCLEOTIDE SEQUENCE [LARGE SCALE GENOMIC DNA]</scope>
    <source>
        <strain>ATCC 33305 / BD413 / ADP1</strain>
    </source>
</reference>
<reference key="2">
    <citation type="journal article" date="2010" name="J. Biol. Chem.">
        <title>Genomics-driven reconstruction of acinetobacter NAD metabolism: insights for antibacterial target selection.</title>
        <authorList>
            <person name="Sorci L."/>
            <person name="Blaby I."/>
            <person name="De Ingeniis J."/>
            <person name="Gerdes S."/>
            <person name="Raffaelli N."/>
            <person name="de Crecy Lagard V."/>
            <person name="Osterman A."/>
        </authorList>
    </citation>
    <scope>FUNCTION</scope>
    <scope>CATALYTIC ACTIVITY</scope>
    <scope>BIOPHYSICOCHEMICAL PROPERTIES</scope>
    <scope>PATHWAY</scope>
    <source>
        <strain>ATCC 33305 / BD413 / ADP1</strain>
    </source>
</reference>
<gene>
    <name evidence="1 3" type="primary">nadE</name>
    <name evidence="4" type="ordered locus">ACIAD2888</name>
</gene>
<accession>Q6F8K4</accession>
<proteinExistence type="evidence at protein level"/>
<evidence type="ECO:0000255" key="1">
    <source>
        <dbReference type="HAMAP-Rule" id="MF_02090"/>
    </source>
</evidence>
<evidence type="ECO:0000269" key="2">
    <source>
    </source>
</evidence>
<evidence type="ECO:0000303" key="3">
    <source>
    </source>
</evidence>
<evidence type="ECO:0000312" key="4">
    <source>
        <dbReference type="EMBL" id="CAG69611.1"/>
    </source>
</evidence>
<protein>
    <recommendedName>
        <fullName evidence="1">Glutamine-dependent NAD(+) synthetase</fullName>
        <ecNumber evidence="1 2">6.3.5.1</ecNumber>
    </recommendedName>
    <alternativeName>
        <fullName evidence="3">NAD synthetase</fullName>
    </alternativeName>
    <alternativeName>
        <fullName evidence="1">NAD(+) synthase [glutamine-hydrolyzing]</fullName>
    </alternativeName>
</protein>
<keyword id="KW-0067">ATP-binding</keyword>
<keyword id="KW-0436">Ligase</keyword>
<keyword id="KW-0520">NAD</keyword>
<keyword id="KW-0547">Nucleotide-binding</keyword>
<feature type="chain" id="PRO_0000457835" description="Glutamine-dependent NAD(+) synthetase">
    <location>
        <begin position="1"/>
        <end position="541"/>
    </location>
</feature>
<feature type="domain" description="CN hydrolase" evidence="1">
    <location>
        <begin position="4"/>
        <end position="243"/>
    </location>
</feature>
<feature type="active site" description="Proton acceptor; for glutaminase activity" evidence="1">
    <location>
        <position position="44"/>
    </location>
</feature>
<feature type="active site" description="For glutaminase activity" evidence="1">
    <location>
        <position position="111"/>
    </location>
</feature>
<feature type="active site" description="Nucleophile; for glutaminase activity" evidence="1">
    <location>
        <position position="147"/>
    </location>
</feature>
<feature type="binding site" evidence="1">
    <location>
        <position position="117"/>
    </location>
    <ligand>
        <name>L-glutamine</name>
        <dbReference type="ChEBI" id="CHEBI:58359"/>
    </ligand>
</feature>
<feature type="binding site" evidence="1">
    <location>
        <position position="173"/>
    </location>
    <ligand>
        <name>L-glutamine</name>
        <dbReference type="ChEBI" id="CHEBI:58359"/>
    </ligand>
</feature>
<feature type="binding site" evidence="1">
    <location>
        <position position="179"/>
    </location>
    <ligand>
        <name>L-glutamine</name>
        <dbReference type="ChEBI" id="CHEBI:58359"/>
    </ligand>
</feature>
<feature type="binding site" evidence="1">
    <location>
        <begin position="286"/>
        <end position="293"/>
    </location>
    <ligand>
        <name>ATP</name>
        <dbReference type="ChEBI" id="CHEBI:30616"/>
    </ligand>
</feature>
<feature type="binding site" evidence="1">
    <location>
        <position position="369"/>
    </location>
    <ligand>
        <name>deamido-NAD(+)</name>
        <dbReference type="ChEBI" id="CHEBI:58437"/>
        <note>ligand shared between two neighboring subunits</note>
    </ligand>
</feature>
<feature type="binding site" evidence="1">
    <location>
        <position position="393"/>
    </location>
    <ligand>
        <name>ATP</name>
        <dbReference type="ChEBI" id="CHEBI:30616"/>
    </ligand>
</feature>
<feature type="binding site" evidence="1">
    <location>
        <position position="398"/>
    </location>
    <ligand>
        <name>deamido-NAD(+)</name>
        <dbReference type="ChEBI" id="CHEBI:58437"/>
        <note>ligand shared between two neighboring subunits</note>
    </ligand>
</feature>
<feature type="binding site" evidence="1">
    <location>
        <position position="510"/>
    </location>
    <ligand>
        <name>deamido-NAD(+)</name>
        <dbReference type="ChEBI" id="CHEBI:58437"/>
        <note>ligand shared between two neighboring subunits</note>
    </ligand>
</feature>
<organism>
    <name type="scientific">Acinetobacter baylyi (strain ATCC 33305 / BD413 / ADP1)</name>
    <dbReference type="NCBI Taxonomy" id="62977"/>
    <lineage>
        <taxon>Bacteria</taxon>
        <taxon>Pseudomonadati</taxon>
        <taxon>Pseudomonadota</taxon>
        <taxon>Gammaproteobacteria</taxon>
        <taxon>Moraxellales</taxon>
        <taxon>Moraxellaceae</taxon>
        <taxon>Acinetobacter</taxon>
    </lineage>
</organism>
<sequence>MKSFKIALAQFSPHIGNIDSNAQRMVEQANEAKKQNADLIIFPELSVIGYPAEDLLLRPNLNKRMQKAFQQLKEVKDIVMVFGFVHQTEEGHRYNSAAVMKDGVVLGVYNKHNLPNYSVFDEKRYFSPGHQHLVFEYLGHKFGVLICEDIWSINTVKQLSKLNVETVLVLNASPYEVGKPQHRVQTLTELSKQLNVHLVYLNQVGGQDDLIFDGSSFIINHDGEVAFQAPSFKEELYYSEFDIEQKRYKKIDPAPALDTIAEIYQSLVMATRDYVQRSGFSGVILGLSGGIDSALTLAIAADAIGADKVQAVMMPYTYTSQISVEDATEQARRMGVTFGIAEIHPIVNSFMQTLYPFFGNAPADATEENLQARARGTLLMGLSNKFGNLVLSTGNKSELAVGYCTLYGDMVGGFAVLKDVYKTIVFELAKYRNTLSETPVIPERVITRPPSAELRPDQKDQDSLPAYDILDAILYAYIEEDQSQSDIIAKGFDKEVVEKVIRLVDRNEYKRRQGAIGPRISSRAFSRERRYPIVNGWRPDD</sequence>
<comment type="function">
    <text evidence="2">Catalyzes the ATP-dependent amidation of deamido-NAD to form NAD. Uses L-glutamine as a nitrogen source (PubMed:20926389). In vitro, can also use ammonia as donor with comparable specific activity, but cannot use nicotinate mononucleotide (NaMN) as substrate (PubMed:20926389).</text>
</comment>
<comment type="catalytic activity">
    <reaction evidence="1 2">
        <text>deamido-NAD(+) + L-glutamine + ATP + H2O = L-glutamate + AMP + diphosphate + NAD(+) + H(+)</text>
        <dbReference type="Rhea" id="RHEA:24384"/>
        <dbReference type="ChEBI" id="CHEBI:15377"/>
        <dbReference type="ChEBI" id="CHEBI:15378"/>
        <dbReference type="ChEBI" id="CHEBI:29985"/>
        <dbReference type="ChEBI" id="CHEBI:30616"/>
        <dbReference type="ChEBI" id="CHEBI:33019"/>
        <dbReference type="ChEBI" id="CHEBI:57540"/>
        <dbReference type="ChEBI" id="CHEBI:58359"/>
        <dbReference type="ChEBI" id="CHEBI:58437"/>
        <dbReference type="ChEBI" id="CHEBI:456215"/>
        <dbReference type="EC" id="6.3.5.1"/>
    </reaction>
    <physiologicalReaction direction="left-to-right" evidence="2">
        <dbReference type="Rhea" id="RHEA:24385"/>
    </physiologicalReaction>
</comment>
<comment type="biophysicochemical properties">
    <kinetics>
        <KM evidence="2">0.017 mM for deamido-NAD</KM>
        <KM evidence="2">4.3 mM for nicotinate mononucleotide</KM>
        <text evidence="2">kcat is 0.57 sec(-1) with deamido-NAD as substrate. kcat is 0.0032 sec(-1) with nicotinate mononucleotide as substrate.</text>
    </kinetics>
</comment>
<comment type="pathway">
    <text evidence="1 2">Cofactor biosynthesis; NAD(+) biosynthesis; NAD(+) from deamido-NAD(+) (L-Gln route): step 1/1.</text>
</comment>
<comment type="similarity">
    <text evidence="1">In the C-terminal section; belongs to the NAD synthetase family.</text>
</comment>